<comment type="subcellular location">
    <subcellularLocation>
        <location evidence="1">Cell inner membrane</location>
        <topology evidence="1">Multi-pass membrane protein</topology>
    </subcellularLocation>
</comment>
<comment type="similarity">
    <text evidence="1">Belongs to the UPF0060 family.</text>
</comment>
<sequence length="107" mass="11859">MFGLFIITAIAEILGCYFPYLILKEGKSAWLWLPTALSLAVFVWLLTLHPAASGRIYAAYGGIYIFTALMWLRFVDQVALTRWDILGGVIVLCGAGLIILQPQGLIR</sequence>
<feature type="chain" id="PRO_0000321577" description="UPF0060 membrane protein A1S_1909">
    <location>
        <begin position="1"/>
        <end position="107"/>
    </location>
</feature>
<feature type="transmembrane region" description="Helical" evidence="1">
    <location>
        <begin position="2"/>
        <end position="22"/>
    </location>
</feature>
<feature type="transmembrane region" description="Helical" evidence="1">
    <location>
        <begin position="28"/>
        <end position="48"/>
    </location>
</feature>
<feature type="transmembrane region" description="Helical" evidence="1">
    <location>
        <begin position="56"/>
        <end position="76"/>
    </location>
</feature>
<feature type="transmembrane region" description="Helical" evidence="1">
    <location>
        <begin position="85"/>
        <end position="105"/>
    </location>
</feature>
<accession>A3M5Z2</accession>
<gene>
    <name type="ordered locus">A1S_1909</name>
</gene>
<proteinExistence type="inferred from homology"/>
<evidence type="ECO:0000255" key="1">
    <source>
        <dbReference type="HAMAP-Rule" id="MF_00010"/>
    </source>
</evidence>
<reference key="1">
    <citation type="journal article" date="2007" name="Genes Dev.">
        <title>New insights into Acinetobacter baumannii pathogenesis revealed by high-density pyrosequencing and transposon mutagenesis.</title>
        <authorList>
            <person name="Smith M.G."/>
            <person name="Gianoulis T.A."/>
            <person name="Pukatzki S."/>
            <person name="Mekalanos J.J."/>
            <person name="Ornston L.N."/>
            <person name="Gerstein M."/>
            <person name="Snyder M."/>
        </authorList>
    </citation>
    <scope>NUCLEOTIDE SEQUENCE [LARGE SCALE GENOMIC DNA]</scope>
    <source>
        <strain>ATCC 17978 / DSM 105126 / CIP 53.77 / LMG 1025 / NCDC KC755 / 5377</strain>
    </source>
</reference>
<keyword id="KW-0997">Cell inner membrane</keyword>
<keyword id="KW-1003">Cell membrane</keyword>
<keyword id="KW-0472">Membrane</keyword>
<keyword id="KW-0812">Transmembrane</keyword>
<keyword id="KW-1133">Transmembrane helix</keyword>
<organism>
    <name type="scientific">Acinetobacter baumannii (strain ATCC 17978 / DSM 105126 / CIP 53.77 / LMG 1025 / NCDC KC755 / 5377)</name>
    <dbReference type="NCBI Taxonomy" id="400667"/>
    <lineage>
        <taxon>Bacteria</taxon>
        <taxon>Pseudomonadati</taxon>
        <taxon>Pseudomonadota</taxon>
        <taxon>Gammaproteobacteria</taxon>
        <taxon>Moraxellales</taxon>
        <taxon>Moraxellaceae</taxon>
        <taxon>Acinetobacter</taxon>
        <taxon>Acinetobacter calcoaceticus/baumannii complex</taxon>
    </lineage>
</organism>
<dbReference type="EMBL" id="CP000521">
    <property type="protein sequence ID" value="ABO12336.1"/>
    <property type="molecule type" value="Genomic_DNA"/>
</dbReference>
<dbReference type="SMR" id="A3M5Z2"/>
<dbReference type="DNASU" id="4918124"/>
<dbReference type="KEGG" id="acb:A1S_1909"/>
<dbReference type="HOGENOM" id="CLU_117653_2_0_6"/>
<dbReference type="GO" id="GO:0005886">
    <property type="term" value="C:plasma membrane"/>
    <property type="evidence" value="ECO:0007669"/>
    <property type="project" value="UniProtKB-SubCell"/>
</dbReference>
<dbReference type="HAMAP" id="MF_00010">
    <property type="entry name" value="UPF0060"/>
    <property type="match status" value="1"/>
</dbReference>
<dbReference type="InterPro" id="IPR003844">
    <property type="entry name" value="UPF0060"/>
</dbReference>
<dbReference type="NCBIfam" id="NF002586">
    <property type="entry name" value="PRK02237.1"/>
    <property type="match status" value="1"/>
</dbReference>
<dbReference type="PANTHER" id="PTHR36116">
    <property type="entry name" value="UPF0060 MEMBRANE PROTEIN YNFA"/>
    <property type="match status" value="1"/>
</dbReference>
<dbReference type="PANTHER" id="PTHR36116:SF1">
    <property type="entry name" value="UPF0060 MEMBRANE PROTEIN YNFA"/>
    <property type="match status" value="1"/>
</dbReference>
<dbReference type="Pfam" id="PF02694">
    <property type="entry name" value="UPF0060"/>
    <property type="match status" value="1"/>
</dbReference>
<protein>
    <recommendedName>
        <fullName evidence="1">UPF0060 membrane protein A1S_1909</fullName>
    </recommendedName>
</protein>
<name>Y1909_ACIBT</name>